<gene>
    <name type="primary">Gr58b</name>
    <name type="synonym">GR58A.2</name>
    <name type="ORF">CG13495</name>
</gene>
<accession>Q9W2B1</accession>
<name>GR58B_DROME</name>
<comment type="function">
    <text evidence="1">Probable gustatory receptor which mediates acceptance or avoidance behavior, depending on its substrates.</text>
</comment>
<comment type="subcellular location">
    <subcellularLocation>
        <location evidence="5">Cell membrane</location>
        <topology evidence="5">Multi-pass membrane protein</topology>
    </subcellularLocation>
</comment>
<comment type="tissue specificity">
    <text evidence="3 4">Expressed in the adult labellar chemosensory neurons, labral sense organ and thorax. In larvae, is in neurons of the terminal external chemosensory organ as well as in the dorsal pharyngeal sense organ.</text>
</comment>
<comment type="similarity">
    <text evidence="5">Belongs to the insect chemoreceptor superfamily. Gustatory receptor (GR) family. Gr22e subfamily.</text>
</comment>
<keyword id="KW-1003">Cell membrane</keyword>
<keyword id="KW-0325">Glycoprotein</keyword>
<keyword id="KW-0472">Membrane</keyword>
<keyword id="KW-0675">Receptor</keyword>
<keyword id="KW-1185">Reference proteome</keyword>
<keyword id="KW-0807">Transducer</keyword>
<keyword id="KW-0812">Transmembrane</keyword>
<keyword id="KW-1133">Transmembrane helix</keyword>
<proteinExistence type="evidence at transcript level"/>
<sequence length="408" mass="47853">MLHPKLGRVMNVVYYHSVVFALMSTTLRIRSCRKCLRLEKVSRTYTIYSFFVGIFLFLNLYFMVPRIMEDGYMKYNIVLQWNFFVMLFLRAIAVVSCYGTLWLKRHKIIQLYKYSLIYWKRFGHITRAIVDKKELLDLQESLARIMIRKIILLYSAFLCSTVLQYQLLSVINPQIFLAFCARLTHFLHFLCVKMGFFGVLVLLNHQFLVIHLAINALHGRKARKKWKALRSVAAMHLKTLRLARRIFDMFDIANATVFINMFMTAINILYHAVQYSNSSIKSNGWGILFGNGLIVFNFWGTMALMEMLDSVVTSCNNTGQQLRQLSDLPKVGPKMQRELDVFTMQLRQNRLVYKICGIVELDKPACLSYIGSILSNVIILMQFDLRRQRQPINDRQYLIHLMKNKTKV</sequence>
<protein>
    <recommendedName>
        <fullName>Putative gustatory receptor 58b</fullName>
    </recommendedName>
</protein>
<evidence type="ECO:0000250" key="1"/>
<evidence type="ECO:0000255" key="2"/>
<evidence type="ECO:0000269" key="3">
    <source>
    </source>
</evidence>
<evidence type="ECO:0000269" key="4">
    <source>
    </source>
</evidence>
<evidence type="ECO:0000305" key="5"/>
<feature type="chain" id="PRO_0000216519" description="Putative gustatory receptor 58b">
    <location>
        <begin position="1"/>
        <end position="408"/>
    </location>
</feature>
<feature type="topological domain" description="Cytoplasmic" evidence="1">
    <location>
        <begin position="1"/>
        <end position="44"/>
    </location>
</feature>
<feature type="transmembrane region" description="Helical; Name=1" evidence="2">
    <location>
        <begin position="45"/>
        <end position="65"/>
    </location>
</feature>
<feature type="topological domain" description="Extracellular" evidence="1">
    <location>
        <begin position="66"/>
        <end position="82"/>
    </location>
</feature>
<feature type="transmembrane region" description="Helical; Name=2" evidence="2">
    <location>
        <begin position="83"/>
        <end position="103"/>
    </location>
</feature>
<feature type="topological domain" description="Cytoplasmic" evidence="1">
    <location>
        <begin position="104"/>
        <end position="150"/>
    </location>
</feature>
<feature type="transmembrane region" description="Helical; Name=3" evidence="2">
    <location>
        <begin position="151"/>
        <end position="171"/>
    </location>
</feature>
<feature type="topological domain" description="Extracellular" evidence="1">
    <location>
        <begin position="172"/>
        <end position="193"/>
    </location>
</feature>
<feature type="transmembrane region" description="Helical; Name=4" evidence="2">
    <location>
        <begin position="194"/>
        <end position="214"/>
    </location>
</feature>
<feature type="topological domain" description="Cytoplasmic" evidence="1">
    <location>
        <begin position="215"/>
        <end position="245"/>
    </location>
</feature>
<feature type="transmembrane region" description="Helical; Name=5" evidence="2">
    <location>
        <begin position="246"/>
        <end position="266"/>
    </location>
</feature>
<feature type="topological domain" description="Extracellular" evidence="1">
    <location>
        <begin position="267"/>
        <end position="284"/>
    </location>
</feature>
<feature type="transmembrane region" description="Helical; Name=6" evidence="2">
    <location>
        <begin position="285"/>
        <end position="305"/>
    </location>
</feature>
<feature type="topological domain" description="Cytoplasmic" evidence="1">
    <location>
        <begin position="306"/>
        <end position="364"/>
    </location>
</feature>
<feature type="transmembrane region" description="Helical; Name=7" evidence="2">
    <location>
        <begin position="365"/>
        <end position="385"/>
    </location>
</feature>
<feature type="topological domain" description="Extracellular" evidence="1">
    <location>
        <begin position="386"/>
        <end position="408"/>
    </location>
</feature>
<feature type="glycosylation site" description="N-linked (GlcNAc...) asparagine" evidence="2">
    <location>
        <position position="277"/>
    </location>
</feature>
<feature type="glycosylation site" description="N-linked (GlcNAc...) asparagine" evidence="2">
    <location>
        <position position="404"/>
    </location>
</feature>
<dbReference type="EMBL" id="AE013599">
    <property type="protein sequence ID" value="AAF46781.2"/>
    <property type="molecule type" value="Genomic_DNA"/>
</dbReference>
<dbReference type="RefSeq" id="NP_523808.2">
    <property type="nucleotide sequence ID" value="NM_079084.4"/>
</dbReference>
<dbReference type="SMR" id="Q9W2B1"/>
<dbReference type="BioGRID" id="63127">
    <property type="interactions" value="1"/>
</dbReference>
<dbReference type="DIP" id="DIP-19069N"/>
<dbReference type="FunCoup" id="Q9W2B1">
    <property type="interactions" value="9"/>
</dbReference>
<dbReference type="IntAct" id="Q9W2B1">
    <property type="interactions" value="1"/>
</dbReference>
<dbReference type="STRING" id="7227.FBpp0071648"/>
<dbReference type="GlyCosmos" id="Q9W2B1">
    <property type="glycosylation" value="2 sites, No reported glycans"/>
</dbReference>
<dbReference type="GlyGen" id="Q9W2B1">
    <property type="glycosylation" value="2 sites"/>
</dbReference>
<dbReference type="PaxDb" id="7227-FBpp0071648"/>
<dbReference type="DNASU" id="37502"/>
<dbReference type="EnsemblMetazoa" id="FBtr0071732">
    <property type="protein sequence ID" value="FBpp0071648"/>
    <property type="gene ID" value="FBgn0041238"/>
</dbReference>
<dbReference type="GeneID" id="37502"/>
<dbReference type="KEGG" id="dme:Dmel_CG13495"/>
<dbReference type="AGR" id="FB:FBgn0041238"/>
<dbReference type="CTD" id="37502"/>
<dbReference type="FlyBase" id="FBgn0041238">
    <property type="gene designation" value="Gr58b"/>
</dbReference>
<dbReference type="VEuPathDB" id="VectorBase:FBgn0041238"/>
<dbReference type="eggNOG" id="ENOG502TCED">
    <property type="taxonomic scope" value="Eukaryota"/>
</dbReference>
<dbReference type="GeneTree" id="ENSGT00940000176507"/>
<dbReference type="HOGENOM" id="CLU_059805_0_0_1"/>
<dbReference type="InParanoid" id="Q9W2B1"/>
<dbReference type="OMA" id="CNNTGQQ"/>
<dbReference type="OrthoDB" id="7883063at2759"/>
<dbReference type="PhylomeDB" id="Q9W2B1"/>
<dbReference type="BioGRID-ORCS" id="37502">
    <property type="hits" value="0 hits in 1 CRISPR screen"/>
</dbReference>
<dbReference type="GenomeRNAi" id="37502"/>
<dbReference type="PRO" id="PR:Q9W2B1"/>
<dbReference type="Proteomes" id="UP000000803">
    <property type="component" value="Chromosome 2R"/>
</dbReference>
<dbReference type="ExpressionAtlas" id="Q9W2B1">
    <property type="expression patterns" value="baseline and differential"/>
</dbReference>
<dbReference type="GO" id="GO:0030424">
    <property type="term" value="C:axon"/>
    <property type="evidence" value="ECO:0000318"/>
    <property type="project" value="GO_Central"/>
</dbReference>
<dbReference type="GO" id="GO:0030425">
    <property type="term" value="C:dendrite"/>
    <property type="evidence" value="ECO:0000318"/>
    <property type="project" value="GO_Central"/>
</dbReference>
<dbReference type="GO" id="GO:0016020">
    <property type="term" value="C:membrane"/>
    <property type="evidence" value="ECO:0000303"/>
    <property type="project" value="UniProtKB"/>
</dbReference>
<dbReference type="GO" id="GO:0043025">
    <property type="term" value="C:neuronal cell body"/>
    <property type="evidence" value="ECO:0000318"/>
    <property type="project" value="GO_Central"/>
</dbReference>
<dbReference type="GO" id="GO:0005886">
    <property type="term" value="C:plasma membrane"/>
    <property type="evidence" value="ECO:0000250"/>
    <property type="project" value="FlyBase"/>
</dbReference>
<dbReference type="GO" id="GO:0015276">
    <property type="term" value="F:ligand-gated monoatomic ion channel activity"/>
    <property type="evidence" value="ECO:0000250"/>
    <property type="project" value="FlyBase"/>
</dbReference>
<dbReference type="GO" id="GO:0008527">
    <property type="term" value="F:taste receptor activity"/>
    <property type="evidence" value="ECO:0000303"/>
    <property type="project" value="UniProtKB"/>
</dbReference>
<dbReference type="GO" id="GO:0050912">
    <property type="term" value="P:detection of chemical stimulus involved in sensory perception of taste"/>
    <property type="evidence" value="ECO:0000303"/>
    <property type="project" value="UniProtKB"/>
</dbReference>
<dbReference type="GO" id="GO:0034220">
    <property type="term" value="P:monoatomic ion transmembrane transport"/>
    <property type="evidence" value="ECO:0000250"/>
    <property type="project" value="FlyBase"/>
</dbReference>
<dbReference type="GO" id="GO:0007165">
    <property type="term" value="P:signal transduction"/>
    <property type="evidence" value="ECO:0007669"/>
    <property type="project" value="UniProtKB-KW"/>
</dbReference>
<dbReference type="InterPro" id="IPR013604">
    <property type="entry name" value="7TM_chemorcpt"/>
</dbReference>
<dbReference type="Pfam" id="PF08395">
    <property type="entry name" value="7tm_7"/>
    <property type="match status" value="1"/>
</dbReference>
<reference key="1">
    <citation type="journal article" date="2000" name="Science">
        <title>The genome sequence of Drosophila melanogaster.</title>
        <authorList>
            <person name="Adams M.D."/>
            <person name="Celniker S.E."/>
            <person name="Holt R.A."/>
            <person name="Evans C.A."/>
            <person name="Gocayne J.D."/>
            <person name="Amanatides P.G."/>
            <person name="Scherer S.E."/>
            <person name="Li P.W."/>
            <person name="Hoskins R.A."/>
            <person name="Galle R.F."/>
            <person name="George R.A."/>
            <person name="Lewis S.E."/>
            <person name="Richards S."/>
            <person name="Ashburner M."/>
            <person name="Henderson S.N."/>
            <person name="Sutton G.G."/>
            <person name="Wortman J.R."/>
            <person name="Yandell M.D."/>
            <person name="Zhang Q."/>
            <person name="Chen L.X."/>
            <person name="Brandon R.C."/>
            <person name="Rogers Y.-H.C."/>
            <person name="Blazej R.G."/>
            <person name="Champe M."/>
            <person name="Pfeiffer B.D."/>
            <person name="Wan K.H."/>
            <person name="Doyle C."/>
            <person name="Baxter E.G."/>
            <person name="Helt G."/>
            <person name="Nelson C.R."/>
            <person name="Miklos G.L.G."/>
            <person name="Abril J.F."/>
            <person name="Agbayani A."/>
            <person name="An H.-J."/>
            <person name="Andrews-Pfannkoch C."/>
            <person name="Baldwin D."/>
            <person name="Ballew R.M."/>
            <person name="Basu A."/>
            <person name="Baxendale J."/>
            <person name="Bayraktaroglu L."/>
            <person name="Beasley E.M."/>
            <person name="Beeson K.Y."/>
            <person name="Benos P.V."/>
            <person name="Berman B.P."/>
            <person name="Bhandari D."/>
            <person name="Bolshakov S."/>
            <person name="Borkova D."/>
            <person name="Botchan M.R."/>
            <person name="Bouck J."/>
            <person name="Brokstein P."/>
            <person name="Brottier P."/>
            <person name="Burtis K.C."/>
            <person name="Busam D.A."/>
            <person name="Butler H."/>
            <person name="Cadieu E."/>
            <person name="Center A."/>
            <person name="Chandra I."/>
            <person name="Cherry J.M."/>
            <person name="Cawley S."/>
            <person name="Dahlke C."/>
            <person name="Davenport L.B."/>
            <person name="Davies P."/>
            <person name="de Pablos B."/>
            <person name="Delcher A."/>
            <person name="Deng Z."/>
            <person name="Mays A.D."/>
            <person name="Dew I."/>
            <person name="Dietz S.M."/>
            <person name="Dodson K."/>
            <person name="Doup L.E."/>
            <person name="Downes M."/>
            <person name="Dugan-Rocha S."/>
            <person name="Dunkov B.C."/>
            <person name="Dunn P."/>
            <person name="Durbin K.J."/>
            <person name="Evangelista C.C."/>
            <person name="Ferraz C."/>
            <person name="Ferriera S."/>
            <person name="Fleischmann W."/>
            <person name="Fosler C."/>
            <person name="Gabrielian A.E."/>
            <person name="Garg N.S."/>
            <person name="Gelbart W.M."/>
            <person name="Glasser K."/>
            <person name="Glodek A."/>
            <person name="Gong F."/>
            <person name="Gorrell J.H."/>
            <person name="Gu Z."/>
            <person name="Guan P."/>
            <person name="Harris M."/>
            <person name="Harris N.L."/>
            <person name="Harvey D.A."/>
            <person name="Heiman T.J."/>
            <person name="Hernandez J.R."/>
            <person name="Houck J."/>
            <person name="Hostin D."/>
            <person name="Houston K.A."/>
            <person name="Howland T.J."/>
            <person name="Wei M.-H."/>
            <person name="Ibegwam C."/>
            <person name="Jalali M."/>
            <person name="Kalush F."/>
            <person name="Karpen G.H."/>
            <person name="Ke Z."/>
            <person name="Kennison J.A."/>
            <person name="Ketchum K.A."/>
            <person name="Kimmel B.E."/>
            <person name="Kodira C.D."/>
            <person name="Kraft C.L."/>
            <person name="Kravitz S."/>
            <person name="Kulp D."/>
            <person name="Lai Z."/>
            <person name="Lasko P."/>
            <person name="Lei Y."/>
            <person name="Levitsky A.A."/>
            <person name="Li J.H."/>
            <person name="Li Z."/>
            <person name="Liang Y."/>
            <person name="Lin X."/>
            <person name="Liu X."/>
            <person name="Mattei B."/>
            <person name="McIntosh T.C."/>
            <person name="McLeod M.P."/>
            <person name="McPherson D."/>
            <person name="Merkulov G."/>
            <person name="Milshina N.V."/>
            <person name="Mobarry C."/>
            <person name="Morris J."/>
            <person name="Moshrefi A."/>
            <person name="Mount S.M."/>
            <person name="Moy M."/>
            <person name="Murphy B."/>
            <person name="Murphy L."/>
            <person name="Muzny D.M."/>
            <person name="Nelson D.L."/>
            <person name="Nelson D.R."/>
            <person name="Nelson K.A."/>
            <person name="Nixon K."/>
            <person name="Nusskern D.R."/>
            <person name="Pacleb J.M."/>
            <person name="Palazzolo M."/>
            <person name="Pittman G.S."/>
            <person name="Pan S."/>
            <person name="Pollard J."/>
            <person name="Puri V."/>
            <person name="Reese M.G."/>
            <person name="Reinert K."/>
            <person name="Remington K."/>
            <person name="Saunders R.D.C."/>
            <person name="Scheeler F."/>
            <person name="Shen H."/>
            <person name="Shue B.C."/>
            <person name="Siden-Kiamos I."/>
            <person name="Simpson M."/>
            <person name="Skupski M.P."/>
            <person name="Smith T.J."/>
            <person name="Spier E."/>
            <person name="Spradling A.C."/>
            <person name="Stapleton M."/>
            <person name="Strong R."/>
            <person name="Sun E."/>
            <person name="Svirskas R."/>
            <person name="Tector C."/>
            <person name="Turner R."/>
            <person name="Venter E."/>
            <person name="Wang A.H."/>
            <person name="Wang X."/>
            <person name="Wang Z.-Y."/>
            <person name="Wassarman D.A."/>
            <person name="Weinstock G.M."/>
            <person name="Weissenbach J."/>
            <person name="Williams S.M."/>
            <person name="Woodage T."/>
            <person name="Worley K.C."/>
            <person name="Wu D."/>
            <person name="Yang S."/>
            <person name="Yao Q.A."/>
            <person name="Ye J."/>
            <person name="Yeh R.-F."/>
            <person name="Zaveri J.S."/>
            <person name="Zhan M."/>
            <person name="Zhang G."/>
            <person name="Zhao Q."/>
            <person name="Zheng L."/>
            <person name="Zheng X.H."/>
            <person name="Zhong F.N."/>
            <person name="Zhong W."/>
            <person name="Zhou X."/>
            <person name="Zhu S.C."/>
            <person name="Zhu X."/>
            <person name="Smith H.O."/>
            <person name="Gibbs R.A."/>
            <person name="Myers E.W."/>
            <person name="Rubin G.M."/>
            <person name="Venter J.C."/>
        </authorList>
    </citation>
    <scope>NUCLEOTIDE SEQUENCE [LARGE SCALE GENOMIC DNA]</scope>
    <source>
        <strain>Berkeley</strain>
    </source>
</reference>
<reference key="2">
    <citation type="journal article" date="2002" name="Genome Biol.">
        <title>Annotation of the Drosophila melanogaster euchromatic genome: a systematic review.</title>
        <authorList>
            <person name="Misra S."/>
            <person name="Crosby M.A."/>
            <person name="Mungall C.J."/>
            <person name="Matthews B.B."/>
            <person name="Campbell K.S."/>
            <person name="Hradecky P."/>
            <person name="Huang Y."/>
            <person name="Kaminker J.S."/>
            <person name="Millburn G.H."/>
            <person name="Prochnik S.E."/>
            <person name="Smith C.D."/>
            <person name="Tupy J.L."/>
            <person name="Whitfield E.J."/>
            <person name="Bayraktaroglu L."/>
            <person name="Berman B.P."/>
            <person name="Bettencourt B.R."/>
            <person name="Celniker S.E."/>
            <person name="de Grey A.D.N.J."/>
            <person name="Drysdale R.A."/>
            <person name="Harris N.L."/>
            <person name="Richter J."/>
            <person name="Russo S."/>
            <person name="Schroeder A.J."/>
            <person name="Shu S.Q."/>
            <person name="Stapleton M."/>
            <person name="Yamada C."/>
            <person name="Ashburner M."/>
            <person name="Gelbart W.M."/>
            <person name="Rubin G.M."/>
            <person name="Lewis S.E."/>
        </authorList>
    </citation>
    <scope>GENOME REANNOTATION</scope>
    <source>
        <strain>Berkeley</strain>
    </source>
</reference>
<reference key="3">
    <citation type="journal article" date="2000" name="Science">
        <title>Candidate taste receptors in Drosophila.</title>
        <authorList>
            <person name="Clyne P.J."/>
            <person name="Warr C.G."/>
            <person name="Carlson J.R."/>
        </authorList>
    </citation>
    <scope>IDENTIFICATION</scope>
    <scope>TISSUE SPECIFICITY</scope>
</reference>
<reference key="4">
    <citation type="journal article" date="2001" name="Curr. Biol.">
        <title>Spatially restricted expression of candidate taste receptors in the Drosophila gustatory system.</title>
        <authorList>
            <person name="Dunipace L."/>
            <person name="Meister S."/>
            <person name="McNealy C."/>
            <person name="Amrein H."/>
        </authorList>
    </citation>
    <scope>IDENTIFICATION</scope>
</reference>
<reference key="5">
    <citation type="journal article" date="2011" name="J. Neurosci.">
        <title>Molecular and cellular organization of the taste system in the Drosophila larva.</title>
        <authorList>
            <person name="Kwon J.Y."/>
            <person name="Dahanukar A."/>
            <person name="Weiss L.A."/>
            <person name="Carlson J.R."/>
        </authorList>
    </citation>
    <scope>TISSUE SPECIFICITY</scope>
</reference>
<organism>
    <name type="scientific">Drosophila melanogaster</name>
    <name type="common">Fruit fly</name>
    <dbReference type="NCBI Taxonomy" id="7227"/>
    <lineage>
        <taxon>Eukaryota</taxon>
        <taxon>Metazoa</taxon>
        <taxon>Ecdysozoa</taxon>
        <taxon>Arthropoda</taxon>
        <taxon>Hexapoda</taxon>
        <taxon>Insecta</taxon>
        <taxon>Pterygota</taxon>
        <taxon>Neoptera</taxon>
        <taxon>Endopterygota</taxon>
        <taxon>Diptera</taxon>
        <taxon>Brachycera</taxon>
        <taxon>Muscomorpha</taxon>
        <taxon>Ephydroidea</taxon>
        <taxon>Drosophilidae</taxon>
        <taxon>Drosophila</taxon>
        <taxon>Sophophora</taxon>
    </lineage>
</organism>